<accession>Q8WUZ0</accession>
<accession>O43770</accession>
<accession>Q6PD89</accession>
<evidence type="ECO:0000250" key="1"/>
<evidence type="ECO:0000250" key="2">
    <source>
        <dbReference type="UniProtKB" id="O08664"/>
    </source>
</evidence>
<evidence type="ECO:0000256" key="3">
    <source>
        <dbReference type="SAM" id="MobiDB-lite"/>
    </source>
</evidence>
<evidence type="ECO:0000269" key="4">
    <source>
    </source>
</evidence>
<evidence type="ECO:0000303" key="5">
    <source>
    </source>
</evidence>
<evidence type="ECO:0000305" key="6"/>
<evidence type="ECO:0007744" key="7">
    <source>
    </source>
</evidence>
<evidence type="ECO:0007744" key="8">
    <source>
    </source>
</evidence>
<evidence type="ECO:0007744" key="9">
    <source>
    </source>
</evidence>
<evidence type="ECO:0007744" key="10">
    <source>
    </source>
</evidence>
<evidence type="ECO:0007744" key="11">
    <source>
    </source>
</evidence>
<evidence type="ECO:0007744" key="12">
    <source>
    </source>
</evidence>
<evidence type="ECO:0007744" key="13">
    <source>
    </source>
</evidence>
<comment type="function">
    <text evidence="1">May play an anti-apoptotic role.</text>
</comment>
<comment type="interaction">
    <interactant intactId="EBI-7850114">
        <id>Q8WUZ0</id>
    </interactant>
    <interactant intactId="EBI-350454">
        <id>Q9Y6U3</id>
        <label>SCIN</label>
    </interactant>
    <organismsDiffer>false</organismsDiffer>
    <experiments>2</experiments>
</comment>
<comment type="alternative products">
    <event type="alternative splicing"/>
    <isoform>
        <id>Q8WUZ0-1</id>
        <name>1</name>
        <sequence type="displayed"/>
    </isoform>
    <isoform>
        <id>Q8WUZ0-2</id>
        <name>2</name>
        <sequence type="described" ref="VSP_019282"/>
    </isoform>
</comment>
<comment type="tissue specificity">
    <text evidence="4">Ubiquitous.</text>
</comment>
<comment type="similarity">
    <text evidence="6">Belongs to the BCL7 family.</text>
</comment>
<sequence>MAGRTVRAETRSRAKDDIKKVMATIEKVRRWEKRWVTVGDTSLRIFKWVPVVDPQEEERRRAGGGAERSRGRERRGRGASPRGGGPLILLDLNDENSNQSFHSEGSLQKGTEPSPGGTPQPSRPVSPAGPPEGVPEEAQPPRLGQERDPGGITAGSTDEPPMLTKEEPVPELLEAEAPEAYPVFEPVPPVPEAAQGDTEDSEGAPPLKRICPNAPDP</sequence>
<keyword id="KW-0025">Alternative splicing</keyword>
<keyword id="KW-0053">Apoptosis</keyword>
<keyword id="KW-0597">Phosphoprotein</keyword>
<keyword id="KW-1267">Proteomics identification</keyword>
<keyword id="KW-1185">Reference proteome</keyword>
<proteinExistence type="evidence at protein level"/>
<protein>
    <recommendedName>
        <fullName>B-cell CLL/lymphoma 7 protein family member C</fullName>
    </recommendedName>
</protein>
<name>BCL7C_HUMAN</name>
<dbReference type="EMBL" id="AJ223980">
    <property type="protein sequence ID" value="CAA11754.1"/>
    <property type="molecule type" value="mRNA"/>
</dbReference>
<dbReference type="EMBL" id="AC135048">
    <property type="status" value="NOT_ANNOTATED_CDS"/>
    <property type="molecule type" value="Genomic_DNA"/>
</dbReference>
<dbReference type="EMBL" id="BC019071">
    <property type="protein sequence ID" value="AAH19071.1"/>
    <property type="molecule type" value="mRNA"/>
</dbReference>
<dbReference type="EMBL" id="BC058863">
    <property type="protein sequence ID" value="AAH58863.1"/>
    <property type="molecule type" value="mRNA"/>
</dbReference>
<dbReference type="CCDS" id="CCDS10693.1">
    <molecule id="Q8WUZ0-1"/>
</dbReference>
<dbReference type="CCDS" id="CCDS67012.1">
    <molecule id="Q8WUZ0-2"/>
</dbReference>
<dbReference type="RefSeq" id="NP_001273455.1">
    <molecule id="Q8WUZ0-2"/>
    <property type="nucleotide sequence ID" value="NM_001286526.2"/>
</dbReference>
<dbReference type="RefSeq" id="NP_004756.2">
    <molecule id="Q8WUZ0-1"/>
    <property type="nucleotide sequence ID" value="NM_004765.3"/>
</dbReference>
<dbReference type="BioGRID" id="114691">
    <property type="interactions" value="114"/>
</dbReference>
<dbReference type="ComplexPortal" id="CPX-1195">
    <property type="entry name" value="Embryonic stem cell-specific SWI/SNF ATP-dependent chromatin remodeling complex"/>
</dbReference>
<dbReference type="ComplexPortal" id="CPX-4084">
    <property type="entry name" value="GBAF (SWI/SNF) ATP-dependent chromatin remodeling complex, ACTL6A-BICRA-SMARCA2 variant"/>
</dbReference>
<dbReference type="ComplexPortal" id="CPX-4203">
    <property type="entry name" value="GBAF (SWI/SNF) ATP-dependent chromatin remodeling complex, ACTL6A-BICRAL-SMARCA2 variant"/>
</dbReference>
<dbReference type="ComplexPortal" id="CPX-4206">
    <property type="entry name" value="GBAF (SWI/SNF) ATP-dependent chromatin remodeling complex, ACTL6A-BICRA-SMARCA4 variant"/>
</dbReference>
<dbReference type="ComplexPortal" id="CPX-4207">
    <property type="entry name" value="GBAF (SWI/SNF) ATP-dependent chromatin remodeling complex, ACTL6A-BICRAL-SMARCA4 variant"/>
</dbReference>
<dbReference type="ComplexPortal" id="CPX-4223">
    <property type="entry name" value="GBAF (SWI/SNF) ATP-dependent chromatin remodeling complex, ACTL6B-BICRA-SMARCA2 variant"/>
</dbReference>
<dbReference type="ComplexPortal" id="CPX-4224">
    <property type="entry name" value="GBAF (SWI/SNF) ATP-dependent chromatin remodeling complex, ACTL6B-BICRAL-SMARCA2 variant"/>
</dbReference>
<dbReference type="ComplexPortal" id="CPX-4225">
    <property type="entry name" value="GBAF (SWI/SNF) ATP-dependent chromatin remodeling complex, ACTL6B-BICRA-SMARCA4 variant"/>
</dbReference>
<dbReference type="ComplexPortal" id="CPX-4226">
    <property type="entry name" value="GBAF (SWI/SNF) ATP-dependent chromatin remodeling complex, ACTL6B-BICRAL-SMARCA4 variant"/>
</dbReference>
<dbReference type="CORUM" id="Q8WUZ0"/>
<dbReference type="FunCoup" id="Q8WUZ0">
    <property type="interactions" value="1159"/>
</dbReference>
<dbReference type="IntAct" id="Q8WUZ0">
    <property type="interactions" value="107"/>
</dbReference>
<dbReference type="MINT" id="Q8WUZ0"/>
<dbReference type="STRING" id="9606.ENSP00000369674"/>
<dbReference type="iPTMnet" id="Q8WUZ0"/>
<dbReference type="MetOSite" id="Q8WUZ0"/>
<dbReference type="PhosphoSitePlus" id="Q8WUZ0"/>
<dbReference type="BioMuta" id="BCL7C"/>
<dbReference type="jPOST" id="Q8WUZ0"/>
<dbReference type="MassIVE" id="Q8WUZ0"/>
<dbReference type="PaxDb" id="9606-ENSP00000369674"/>
<dbReference type="PeptideAtlas" id="Q8WUZ0"/>
<dbReference type="ProteomicsDB" id="74730">
    <molecule id="Q8WUZ0-1"/>
</dbReference>
<dbReference type="ProteomicsDB" id="74731">
    <molecule id="Q8WUZ0-2"/>
</dbReference>
<dbReference type="Pumba" id="Q8WUZ0"/>
<dbReference type="Antibodypedia" id="13852">
    <property type="antibodies" value="186 antibodies from 26 providers"/>
</dbReference>
<dbReference type="DNASU" id="9274"/>
<dbReference type="Ensembl" id="ENST00000215115.5">
    <molecule id="Q8WUZ0-1"/>
    <property type="protein sequence ID" value="ENSP00000215115.4"/>
    <property type="gene ID" value="ENSG00000099385.12"/>
</dbReference>
<dbReference type="Ensembl" id="ENST00000380317.8">
    <molecule id="Q8WUZ0-2"/>
    <property type="protein sequence ID" value="ENSP00000369674.4"/>
    <property type="gene ID" value="ENSG00000099385.12"/>
</dbReference>
<dbReference type="GeneID" id="9274"/>
<dbReference type="KEGG" id="hsa:9274"/>
<dbReference type="MANE-Select" id="ENST00000215115.5">
    <property type="protein sequence ID" value="ENSP00000215115.4"/>
    <property type="RefSeq nucleotide sequence ID" value="NM_004765.4"/>
    <property type="RefSeq protein sequence ID" value="NP_004756.2"/>
</dbReference>
<dbReference type="UCSC" id="uc002dzv.5">
    <molecule id="Q8WUZ0-1"/>
    <property type="organism name" value="human"/>
</dbReference>
<dbReference type="AGR" id="HGNC:1006"/>
<dbReference type="CTD" id="9274"/>
<dbReference type="DisGeNET" id="9274"/>
<dbReference type="GeneCards" id="BCL7C"/>
<dbReference type="HGNC" id="HGNC:1006">
    <property type="gene designation" value="BCL7C"/>
</dbReference>
<dbReference type="HPA" id="ENSG00000099385">
    <property type="expression patterns" value="Low tissue specificity"/>
</dbReference>
<dbReference type="MIM" id="605847">
    <property type="type" value="gene"/>
</dbReference>
<dbReference type="neXtProt" id="NX_Q8WUZ0"/>
<dbReference type="OpenTargets" id="ENSG00000099385"/>
<dbReference type="PharmGKB" id="PA25316"/>
<dbReference type="VEuPathDB" id="HostDB:ENSG00000099385"/>
<dbReference type="eggNOG" id="KOG4095">
    <property type="taxonomic scope" value="Eukaryota"/>
</dbReference>
<dbReference type="GeneTree" id="ENSGT00390000002172"/>
<dbReference type="HOGENOM" id="CLU_110835_1_1_1"/>
<dbReference type="InParanoid" id="Q8WUZ0"/>
<dbReference type="OMA" id="PMLGQEG"/>
<dbReference type="OrthoDB" id="5989898at2759"/>
<dbReference type="PAN-GO" id="Q8WUZ0">
    <property type="GO annotations" value="0 GO annotations based on evolutionary models"/>
</dbReference>
<dbReference type="PhylomeDB" id="Q8WUZ0"/>
<dbReference type="TreeFam" id="TF317441"/>
<dbReference type="PathwayCommons" id="Q8WUZ0"/>
<dbReference type="Reactome" id="R-HSA-9824585">
    <property type="pathway name" value="Regulation of MITF-M-dependent genes involved in pigmentation"/>
</dbReference>
<dbReference type="Reactome" id="R-HSA-9845323">
    <property type="pathway name" value="Regulation of endogenous retroelements by Piwi-interacting RNAs (piRNAs)"/>
</dbReference>
<dbReference type="SignaLink" id="Q8WUZ0"/>
<dbReference type="SIGNOR" id="Q8WUZ0"/>
<dbReference type="BioGRID-ORCS" id="9274">
    <property type="hits" value="13 hits in 1152 CRISPR screens"/>
</dbReference>
<dbReference type="ChiTaRS" id="BCL7C">
    <property type="organism name" value="human"/>
</dbReference>
<dbReference type="GenomeRNAi" id="9274"/>
<dbReference type="Pharos" id="Q8WUZ0">
    <property type="development level" value="Tdark"/>
</dbReference>
<dbReference type="PRO" id="PR:Q8WUZ0"/>
<dbReference type="Proteomes" id="UP000005640">
    <property type="component" value="Chromosome 16"/>
</dbReference>
<dbReference type="RNAct" id="Q8WUZ0">
    <property type="molecule type" value="protein"/>
</dbReference>
<dbReference type="Bgee" id="ENSG00000099385">
    <property type="expression patterns" value="Expressed in lower esophagus mucosa and 184 other cell types or tissues"/>
</dbReference>
<dbReference type="ExpressionAtlas" id="Q8WUZ0">
    <property type="expression patterns" value="baseline and differential"/>
</dbReference>
<dbReference type="GO" id="GO:0000785">
    <property type="term" value="C:chromatin"/>
    <property type="evidence" value="ECO:0000303"/>
    <property type="project" value="ComplexPortal"/>
</dbReference>
<dbReference type="GO" id="GO:0140288">
    <property type="term" value="C:GBAF complex"/>
    <property type="evidence" value="ECO:0000303"/>
    <property type="project" value="ComplexPortal"/>
</dbReference>
<dbReference type="GO" id="GO:0005654">
    <property type="term" value="C:nucleoplasm"/>
    <property type="evidence" value="ECO:0000304"/>
    <property type="project" value="Reactome"/>
</dbReference>
<dbReference type="GO" id="GO:0016514">
    <property type="term" value="C:SWI/SNF complex"/>
    <property type="evidence" value="ECO:0000314"/>
    <property type="project" value="UniProtKB"/>
</dbReference>
<dbReference type="GO" id="GO:0006915">
    <property type="term" value="P:apoptotic process"/>
    <property type="evidence" value="ECO:0007669"/>
    <property type="project" value="UniProtKB-KW"/>
</dbReference>
<dbReference type="GO" id="GO:0006338">
    <property type="term" value="P:chromatin remodeling"/>
    <property type="evidence" value="ECO:0000303"/>
    <property type="project" value="ComplexPortal"/>
</dbReference>
<dbReference type="GO" id="GO:0045596">
    <property type="term" value="P:negative regulation of cell differentiation"/>
    <property type="evidence" value="ECO:0000303"/>
    <property type="project" value="ComplexPortal"/>
</dbReference>
<dbReference type="GO" id="GO:0008284">
    <property type="term" value="P:positive regulation of cell population proliferation"/>
    <property type="evidence" value="ECO:0000303"/>
    <property type="project" value="ComplexPortal"/>
</dbReference>
<dbReference type="GO" id="GO:2000781">
    <property type="term" value="P:positive regulation of double-strand break repair"/>
    <property type="evidence" value="ECO:0000303"/>
    <property type="project" value="ComplexPortal"/>
</dbReference>
<dbReference type="GO" id="GO:1902459">
    <property type="term" value="P:positive regulation of stem cell population maintenance"/>
    <property type="evidence" value="ECO:0000303"/>
    <property type="project" value="ComplexPortal"/>
</dbReference>
<dbReference type="GO" id="GO:0070316">
    <property type="term" value="P:regulation of G0 to G1 transition"/>
    <property type="evidence" value="ECO:0000303"/>
    <property type="project" value="ComplexPortal"/>
</dbReference>
<dbReference type="GO" id="GO:2000045">
    <property type="term" value="P:regulation of G1/S transition of mitotic cell cycle"/>
    <property type="evidence" value="ECO:0000303"/>
    <property type="project" value="ComplexPortal"/>
</dbReference>
<dbReference type="GO" id="GO:0030071">
    <property type="term" value="P:regulation of mitotic metaphase/anaphase transition"/>
    <property type="evidence" value="ECO:0000303"/>
    <property type="project" value="ComplexPortal"/>
</dbReference>
<dbReference type="GO" id="GO:2000819">
    <property type="term" value="P:regulation of nucleotide-excision repair"/>
    <property type="evidence" value="ECO:0000303"/>
    <property type="project" value="ComplexPortal"/>
</dbReference>
<dbReference type="GO" id="GO:0006357">
    <property type="term" value="P:regulation of transcription by RNA polymerase II"/>
    <property type="evidence" value="ECO:0000303"/>
    <property type="project" value="ComplexPortal"/>
</dbReference>
<dbReference type="InterPro" id="IPR006804">
    <property type="entry name" value="BCL7"/>
</dbReference>
<dbReference type="PANTHER" id="PTHR12767:SF10">
    <property type="entry name" value="B-CELL CLL_LYMPHOMA 7 PROTEIN FAMILY MEMBER C"/>
    <property type="match status" value="1"/>
</dbReference>
<dbReference type="PANTHER" id="PTHR12767">
    <property type="entry name" value="BCL7 RELATED"/>
    <property type="match status" value="1"/>
</dbReference>
<dbReference type="Pfam" id="PF04714">
    <property type="entry name" value="BCL_N"/>
    <property type="match status" value="1"/>
</dbReference>
<gene>
    <name type="primary">BCL7C</name>
</gene>
<reference key="1">
    <citation type="journal article" date="1998" name="Gene">
        <title>The BCL7 gene family: deletion of BCL7B in Williams syndrome.</title>
        <authorList>
            <person name="Jadayel D.M."/>
            <person name="Osborne L.R."/>
            <person name="Coignet L.J.A."/>
            <person name="Zani V.J."/>
            <person name="Tsui L.-C."/>
            <person name="Scherer S.W."/>
            <person name="Dyer M.J.S."/>
        </authorList>
    </citation>
    <scope>NUCLEOTIDE SEQUENCE [MRNA] (ISOFORM 1)</scope>
    <scope>TISSUE SPECIFICITY</scope>
    <source>
        <tissue>Skeletal muscle</tissue>
    </source>
</reference>
<reference key="2">
    <citation type="journal article" date="2004" name="Nature">
        <title>The sequence and analysis of duplication-rich human chromosome 16.</title>
        <authorList>
            <person name="Martin J."/>
            <person name="Han C."/>
            <person name="Gordon L.A."/>
            <person name="Terry A."/>
            <person name="Prabhakar S."/>
            <person name="She X."/>
            <person name="Xie G."/>
            <person name="Hellsten U."/>
            <person name="Chan Y.M."/>
            <person name="Altherr M."/>
            <person name="Couronne O."/>
            <person name="Aerts A."/>
            <person name="Bajorek E."/>
            <person name="Black S."/>
            <person name="Blumer H."/>
            <person name="Branscomb E."/>
            <person name="Brown N.C."/>
            <person name="Bruno W.J."/>
            <person name="Buckingham J.M."/>
            <person name="Callen D.F."/>
            <person name="Campbell C.S."/>
            <person name="Campbell M.L."/>
            <person name="Campbell E.W."/>
            <person name="Caoile C."/>
            <person name="Challacombe J.F."/>
            <person name="Chasteen L.A."/>
            <person name="Chertkov O."/>
            <person name="Chi H.C."/>
            <person name="Christensen M."/>
            <person name="Clark L.M."/>
            <person name="Cohn J.D."/>
            <person name="Denys M."/>
            <person name="Detter J.C."/>
            <person name="Dickson M."/>
            <person name="Dimitrijevic-Bussod M."/>
            <person name="Escobar J."/>
            <person name="Fawcett J.J."/>
            <person name="Flowers D."/>
            <person name="Fotopulos D."/>
            <person name="Glavina T."/>
            <person name="Gomez M."/>
            <person name="Gonzales E."/>
            <person name="Goodstein D."/>
            <person name="Goodwin L.A."/>
            <person name="Grady D.L."/>
            <person name="Grigoriev I."/>
            <person name="Groza M."/>
            <person name="Hammon N."/>
            <person name="Hawkins T."/>
            <person name="Haydu L."/>
            <person name="Hildebrand C.E."/>
            <person name="Huang W."/>
            <person name="Israni S."/>
            <person name="Jett J."/>
            <person name="Jewett P.B."/>
            <person name="Kadner K."/>
            <person name="Kimball H."/>
            <person name="Kobayashi A."/>
            <person name="Krawczyk M.-C."/>
            <person name="Leyba T."/>
            <person name="Longmire J.L."/>
            <person name="Lopez F."/>
            <person name="Lou Y."/>
            <person name="Lowry S."/>
            <person name="Ludeman T."/>
            <person name="Manohar C.F."/>
            <person name="Mark G.A."/>
            <person name="McMurray K.L."/>
            <person name="Meincke L.J."/>
            <person name="Morgan J."/>
            <person name="Moyzis R.K."/>
            <person name="Mundt M.O."/>
            <person name="Munk A.C."/>
            <person name="Nandkeshwar R.D."/>
            <person name="Pitluck S."/>
            <person name="Pollard M."/>
            <person name="Predki P."/>
            <person name="Parson-Quintana B."/>
            <person name="Ramirez L."/>
            <person name="Rash S."/>
            <person name="Retterer J."/>
            <person name="Ricke D.O."/>
            <person name="Robinson D.L."/>
            <person name="Rodriguez A."/>
            <person name="Salamov A."/>
            <person name="Saunders E.H."/>
            <person name="Scott D."/>
            <person name="Shough T."/>
            <person name="Stallings R.L."/>
            <person name="Stalvey M."/>
            <person name="Sutherland R.D."/>
            <person name="Tapia R."/>
            <person name="Tesmer J.G."/>
            <person name="Thayer N."/>
            <person name="Thompson L.S."/>
            <person name="Tice H."/>
            <person name="Torney D.C."/>
            <person name="Tran-Gyamfi M."/>
            <person name="Tsai M."/>
            <person name="Ulanovsky L.E."/>
            <person name="Ustaszewska A."/>
            <person name="Vo N."/>
            <person name="White P.S."/>
            <person name="Williams A.L."/>
            <person name="Wills P.L."/>
            <person name="Wu J.-R."/>
            <person name="Wu K."/>
            <person name="Yang J."/>
            <person name="DeJong P."/>
            <person name="Bruce D."/>
            <person name="Doggett N.A."/>
            <person name="Deaven L."/>
            <person name="Schmutz J."/>
            <person name="Grimwood J."/>
            <person name="Richardson P."/>
            <person name="Rokhsar D.S."/>
            <person name="Eichler E.E."/>
            <person name="Gilna P."/>
            <person name="Lucas S.M."/>
            <person name="Myers R.M."/>
            <person name="Rubin E.M."/>
            <person name="Pennacchio L.A."/>
        </authorList>
    </citation>
    <scope>NUCLEOTIDE SEQUENCE [LARGE SCALE GENOMIC DNA]</scope>
</reference>
<reference key="3">
    <citation type="journal article" date="2004" name="Genome Res.">
        <title>The status, quality, and expansion of the NIH full-length cDNA project: the Mammalian Gene Collection (MGC).</title>
        <authorList>
            <consortium name="The MGC Project Team"/>
        </authorList>
    </citation>
    <scope>NUCLEOTIDE SEQUENCE [LARGE SCALE MRNA] (ISOFORMS 1 AND 2)</scope>
    <source>
        <tissue>Brain</tissue>
        <tissue>Pancreas</tissue>
    </source>
</reference>
<reference key="4">
    <citation type="journal article" date="2008" name="J. Proteome Res.">
        <title>Combining protein-based IMAC, peptide-based IMAC, and MudPIT for efficient phosphoproteomic analysis.</title>
        <authorList>
            <person name="Cantin G.T."/>
            <person name="Yi W."/>
            <person name="Lu B."/>
            <person name="Park S.K."/>
            <person name="Xu T."/>
            <person name="Lee J.-D."/>
            <person name="Yates J.R. III"/>
        </authorList>
    </citation>
    <scope>PHOSPHORYLATION [LARGE SCALE ANALYSIS] AT THR-111; SER-114; SER-122 AND SER-126</scope>
    <scope>IDENTIFICATION BY MASS SPECTROMETRY [LARGE SCALE ANALYSIS]</scope>
    <source>
        <tissue>Cervix carcinoma</tissue>
    </source>
</reference>
<reference key="5">
    <citation type="journal article" date="2008" name="Proc. Natl. Acad. Sci. U.S.A.">
        <title>A quantitative atlas of mitotic phosphorylation.</title>
        <authorList>
            <person name="Dephoure N."/>
            <person name="Zhou C."/>
            <person name="Villen J."/>
            <person name="Beausoleil S.A."/>
            <person name="Bakalarski C.E."/>
            <person name="Elledge S.J."/>
            <person name="Gygi S.P."/>
        </authorList>
    </citation>
    <scope>PHOSPHORYLATION [LARGE SCALE ANALYSIS] AT THR-111; THR-118 AND SER-126</scope>
    <scope>IDENTIFICATION BY MASS SPECTROMETRY [LARGE SCALE ANALYSIS]</scope>
    <source>
        <tissue>Cervix carcinoma</tissue>
    </source>
</reference>
<reference key="6">
    <citation type="journal article" date="2009" name="Anal. Chem.">
        <title>Lys-N and trypsin cover complementary parts of the phosphoproteome in a refined SCX-based approach.</title>
        <authorList>
            <person name="Gauci S."/>
            <person name="Helbig A.O."/>
            <person name="Slijper M."/>
            <person name="Krijgsveld J."/>
            <person name="Heck A.J."/>
            <person name="Mohammed S."/>
        </authorList>
    </citation>
    <scope>IDENTIFICATION BY MASS SPECTROMETRY [LARGE SCALE ANALYSIS]</scope>
</reference>
<reference key="7">
    <citation type="journal article" date="2009" name="Sci. Signal.">
        <title>Quantitative phosphoproteomic analysis of T cell receptor signaling reveals system-wide modulation of protein-protein interactions.</title>
        <authorList>
            <person name="Mayya V."/>
            <person name="Lundgren D.H."/>
            <person name="Hwang S.-I."/>
            <person name="Rezaul K."/>
            <person name="Wu L."/>
            <person name="Eng J.K."/>
            <person name="Rodionov V."/>
            <person name="Han D.K."/>
        </authorList>
    </citation>
    <scope>PHOSPHORYLATION [LARGE SCALE ANALYSIS] AT SER-97; SER-100; THR-111; THR-118; SER-122 AND SER-126</scope>
    <scope>IDENTIFICATION BY MASS SPECTROMETRY [LARGE SCALE ANALYSIS]</scope>
    <source>
        <tissue>Leukemic T-cell</tissue>
    </source>
</reference>
<reference key="8">
    <citation type="journal article" date="2010" name="Sci. Signal.">
        <title>Quantitative phosphoproteomics reveals widespread full phosphorylation site occupancy during mitosis.</title>
        <authorList>
            <person name="Olsen J.V."/>
            <person name="Vermeulen M."/>
            <person name="Santamaria A."/>
            <person name="Kumar C."/>
            <person name="Miller M.L."/>
            <person name="Jensen L.J."/>
            <person name="Gnad F."/>
            <person name="Cox J."/>
            <person name="Jensen T.S."/>
            <person name="Nigg E.A."/>
            <person name="Brunak S."/>
            <person name="Mann M."/>
        </authorList>
    </citation>
    <scope>PHOSPHORYLATION [LARGE SCALE ANALYSIS] AT SER-100 AND SER-126</scope>
    <scope>IDENTIFICATION BY MASS SPECTROMETRY [LARGE SCALE ANALYSIS]</scope>
    <source>
        <tissue>Cervix carcinoma</tissue>
    </source>
</reference>
<reference key="9">
    <citation type="journal article" date="2011" name="Sci. Signal.">
        <title>System-wide temporal characterization of the proteome and phosphoproteome of human embryonic stem cell differentiation.</title>
        <authorList>
            <person name="Rigbolt K.T."/>
            <person name="Prokhorova T.A."/>
            <person name="Akimov V."/>
            <person name="Henningsen J."/>
            <person name="Johansen P.T."/>
            <person name="Kratchmarova I."/>
            <person name="Kassem M."/>
            <person name="Mann M."/>
            <person name="Olsen J.V."/>
            <person name="Blagoev B."/>
        </authorList>
    </citation>
    <scope>PHOSPHORYLATION [LARGE SCALE ANALYSIS] AT SER-126</scope>
    <scope>IDENTIFICATION BY MASS SPECTROMETRY [LARGE SCALE ANALYSIS]</scope>
</reference>
<reference key="10">
    <citation type="journal article" date="2013" name="J. Proteome Res.">
        <title>Toward a comprehensive characterization of a human cancer cell phosphoproteome.</title>
        <authorList>
            <person name="Zhou H."/>
            <person name="Di Palma S."/>
            <person name="Preisinger C."/>
            <person name="Peng M."/>
            <person name="Polat A.N."/>
            <person name="Heck A.J."/>
            <person name="Mohammed S."/>
        </authorList>
    </citation>
    <scope>PHOSPHORYLATION [LARGE SCALE ANALYSIS] AT THR-118; SER-126 AND SER-156</scope>
    <scope>IDENTIFICATION BY MASS SPECTROMETRY [LARGE SCALE ANALYSIS]</scope>
    <source>
        <tissue>Cervix carcinoma</tissue>
        <tissue>Erythroleukemia</tissue>
    </source>
</reference>
<reference key="11">
    <citation type="journal article" date="2014" name="J. Proteomics">
        <title>An enzyme assisted RP-RPLC approach for in-depth analysis of human liver phosphoproteome.</title>
        <authorList>
            <person name="Bian Y."/>
            <person name="Song C."/>
            <person name="Cheng K."/>
            <person name="Dong M."/>
            <person name="Wang F."/>
            <person name="Huang J."/>
            <person name="Sun D."/>
            <person name="Wang L."/>
            <person name="Ye M."/>
            <person name="Zou H."/>
        </authorList>
    </citation>
    <scope>PHOSPHORYLATION [LARGE SCALE ANALYSIS] AT THR-111; THR-118; SER-122 AND SER-126</scope>
    <scope>IDENTIFICATION BY MASS SPECTROMETRY [LARGE SCALE ANALYSIS]</scope>
    <source>
        <tissue>Liver</tissue>
    </source>
</reference>
<organism>
    <name type="scientific">Homo sapiens</name>
    <name type="common">Human</name>
    <dbReference type="NCBI Taxonomy" id="9606"/>
    <lineage>
        <taxon>Eukaryota</taxon>
        <taxon>Metazoa</taxon>
        <taxon>Chordata</taxon>
        <taxon>Craniata</taxon>
        <taxon>Vertebrata</taxon>
        <taxon>Euteleostomi</taxon>
        <taxon>Mammalia</taxon>
        <taxon>Eutheria</taxon>
        <taxon>Euarchontoglires</taxon>
        <taxon>Primates</taxon>
        <taxon>Haplorrhini</taxon>
        <taxon>Catarrhini</taxon>
        <taxon>Hominidae</taxon>
        <taxon>Homo</taxon>
    </lineage>
</organism>
<feature type="chain" id="PRO_0000239833" description="B-cell CLL/lymphoma 7 protein family member C">
    <location>
        <begin position="1"/>
        <end position="217"/>
    </location>
</feature>
<feature type="region of interest" description="Disordered" evidence="3">
    <location>
        <begin position="49"/>
        <end position="217"/>
    </location>
</feature>
<feature type="compositionally biased region" description="Polar residues" evidence="3">
    <location>
        <begin position="95"/>
        <end position="111"/>
    </location>
</feature>
<feature type="compositionally biased region" description="Pro residues" evidence="3">
    <location>
        <begin position="116"/>
        <end position="133"/>
    </location>
</feature>
<feature type="modified residue" description="Phosphoserine" evidence="9">
    <location>
        <position position="97"/>
    </location>
</feature>
<feature type="modified residue" description="Phosphoserine" evidence="9 10">
    <location>
        <position position="100"/>
    </location>
</feature>
<feature type="modified residue" description="Phosphoserine" evidence="2">
    <location>
        <position position="103"/>
    </location>
</feature>
<feature type="modified residue" description="Phosphothreonine" evidence="7 8 9 13">
    <location>
        <position position="111"/>
    </location>
</feature>
<feature type="modified residue" description="Phosphoserine" evidence="7">
    <location>
        <position position="114"/>
    </location>
</feature>
<feature type="modified residue" description="Phosphothreonine" evidence="8 9 12 13">
    <location>
        <position position="118"/>
    </location>
</feature>
<feature type="modified residue" description="Phosphoserine" evidence="7 9 13">
    <location>
        <position position="122"/>
    </location>
</feature>
<feature type="modified residue" description="Phosphoserine" evidence="7 8 9 10 11 12 13">
    <location>
        <position position="126"/>
    </location>
</feature>
<feature type="modified residue" description="Phosphoserine" evidence="12">
    <location>
        <position position="156"/>
    </location>
</feature>
<feature type="splice variant" id="VSP_019282" description="In isoform 2." evidence="5">
    <original>APEAYPVFEPVPPVPEAAQGDTEDSEGAPPLKRICPNAPDP</original>
    <variation>DSGVRMTRRALHEKGLKTEPLRRLLPRRGLRTNVRPSSMAVPDTRAPGGGSKAPRAPRTIPQGKGR</variation>
    <location>
        <begin position="177"/>
        <end position="217"/>
    </location>
</feature>
<feature type="sequence conflict" description="In Ref. 1; CAA11754." evidence="6" ref="1">
    <original>Q</original>
    <variation>P</variation>
    <location>
        <position position="108"/>
    </location>
</feature>
<feature type="sequence conflict" description="In Ref. 1; CAA11754." evidence="6" ref="1">
    <original>E</original>
    <variation>G</variation>
    <location>
        <position position="202"/>
    </location>
</feature>